<protein>
    <recommendedName>
        <fullName evidence="5">Probable 3-ketoacyl-CoA synthase 14</fullName>
        <shortName evidence="5">KCS-14</shortName>
        <ecNumber evidence="6">2.3.1.199</ecNumber>
    </recommendedName>
    <alternativeName>
        <fullName evidence="5">Very long-chain fatty acid condensing enzyme 14</fullName>
        <shortName evidence="5">VLCFA condensing enzyme 14</shortName>
    </alternativeName>
</protein>
<reference key="1">
    <citation type="journal article" date="2000" name="Nature">
        <title>Sequence and analysis of chromosome 3 of the plant Arabidopsis thaliana.</title>
        <authorList>
            <person name="Salanoubat M."/>
            <person name="Lemcke K."/>
            <person name="Rieger M."/>
            <person name="Ansorge W."/>
            <person name="Unseld M."/>
            <person name="Fartmann B."/>
            <person name="Valle G."/>
            <person name="Bloecker H."/>
            <person name="Perez-Alonso M."/>
            <person name="Obermaier B."/>
            <person name="Delseny M."/>
            <person name="Boutry M."/>
            <person name="Grivell L.A."/>
            <person name="Mache R."/>
            <person name="Puigdomenech P."/>
            <person name="De Simone V."/>
            <person name="Choisne N."/>
            <person name="Artiguenave F."/>
            <person name="Robert C."/>
            <person name="Brottier P."/>
            <person name="Wincker P."/>
            <person name="Cattolico L."/>
            <person name="Weissenbach J."/>
            <person name="Saurin W."/>
            <person name="Quetier F."/>
            <person name="Schaefer M."/>
            <person name="Mueller-Auer S."/>
            <person name="Gabel C."/>
            <person name="Fuchs M."/>
            <person name="Benes V."/>
            <person name="Wurmbach E."/>
            <person name="Drzonek H."/>
            <person name="Erfle H."/>
            <person name="Jordan N."/>
            <person name="Bangert S."/>
            <person name="Wiedelmann R."/>
            <person name="Kranz H."/>
            <person name="Voss H."/>
            <person name="Holland R."/>
            <person name="Brandt P."/>
            <person name="Nyakatura G."/>
            <person name="Vezzi A."/>
            <person name="D'Angelo M."/>
            <person name="Pallavicini A."/>
            <person name="Toppo S."/>
            <person name="Simionati B."/>
            <person name="Conrad A."/>
            <person name="Hornischer K."/>
            <person name="Kauer G."/>
            <person name="Loehnert T.-H."/>
            <person name="Nordsiek G."/>
            <person name="Reichelt J."/>
            <person name="Scharfe M."/>
            <person name="Schoen O."/>
            <person name="Bargues M."/>
            <person name="Terol J."/>
            <person name="Climent J."/>
            <person name="Navarro P."/>
            <person name="Collado C."/>
            <person name="Perez-Perez A."/>
            <person name="Ottenwaelder B."/>
            <person name="Duchemin D."/>
            <person name="Cooke R."/>
            <person name="Laudie M."/>
            <person name="Berger-Llauro C."/>
            <person name="Purnelle B."/>
            <person name="Masuy D."/>
            <person name="de Haan M."/>
            <person name="Maarse A.C."/>
            <person name="Alcaraz J.-P."/>
            <person name="Cottet A."/>
            <person name="Casacuberta E."/>
            <person name="Monfort A."/>
            <person name="Argiriou A."/>
            <person name="Flores M."/>
            <person name="Liguori R."/>
            <person name="Vitale D."/>
            <person name="Mannhaupt G."/>
            <person name="Haase D."/>
            <person name="Schoof H."/>
            <person name="Rudd S."/>
            <person name="Zaccaria P."/>
            <person name="Mewes H.-W."/>
            <person name="Mayer K.F.X."/>
            <person name="Kaul S."/>
            <person name="Town C.D."/>
            <person name="Koo H.L."/>
            <person name="Tallon L.J."/>
            <person name="Jenkins J."/>
            <person name="Rooney T."/>
            <person name="Rizzo M."/>
            <person name="Walts A."/>
            <person name="Utterback T."/>
            <person name="Fujii C.Y."/>
            <person name="Shea T.P."/>
            <person name="Creasy T.H."/>
            <person name="Haas B."/>
            <person name="Maiti R."/>
            <person name="Wu D."/>
            <person name="Peterson J."/>
            <person name="Van Aken S."/>
            <person name="Pai G."/>
            <person name="Militscher J."/>
            <person name="Sellers P."/>
            <person name="Gill J.E."/>
            <person name="Feldblyum T.V."/>
            <person name="Preuss D."/>
            <person name="Lin X."/>
            <person name="Nierman W.C."/>
            <person name="Salzberg S.L."/>
            <person name="White O."/>
            <person name="Venter J.C."/>
            <person name="Fraser C.M."/>
            <person name="Kaneko T."/>
            <person name="Nakamura Y."/>
            <person name="Sato S."/>
            <person name="Kato T."/>
            <person name="Asamizu E."/>
            <person name="Sasamoto S."/>
            <person name="Kimura T."/>
            <person name="Idesawa K."/>
            <person name="Kawashima K."/>
            <person name="Kishida Y."/>
            <person name="Kiyokawa C."/>
            <person name="Kohara M."/>
            <person name="Matsumoto M."/>
            <person name="Matsuno A."/>
            <person name="Muraki A."/>
            <person name="Nakayama S."/>
            <person name="Nakazaki N."/>
            <person name="Shinpo S."/>
            <person name="Takeuchi C."/>
            <person name="Wada T."/>
            <person name="Watanabe A."/>
            <person name="Yamada M."/>
            <person name="Yasuda M."/>
            <person name="Tabata S."/>
        </authorList>
    </citation>
    <scope>NUCLEOTIDE SEQUENCE [LARGE SCALE GENOMIC DNA]</scope>
    <source>
        <strain>cv. Columbia</strain>
    </source>
</reference>
<reference key="2">
    <citation type="journal article" date="2017" name="Plant J.">
        <title>Araport11: a complete reannotation of the Arabidopsis thaliana reference genome.</title>
        <authorList>
            <person name="Cheng C.Y."/>
            <person name="Krishnakumar V."/>
            <person name="Chan A.P."/>
            <person name="Thibaud-Nissen F."/>
            <person name="Schobel S."/>
            <person name="Town C.D."/>
        </authorList>
    </citation>
    <scope>GENOME REANNOTATION</scope>
    <source>
        <strain>cv. Columbia</strain>
    </source>
</reference>
<reference key="3">
    <citation type="journal article" date="2003" name="Pest Manag. Sci.">
        <title>Flufenacet herbicide treatment phenocopies the fiddlehead mutant in Arabidopsis thaliana.</title>
        <authorList>
            <person name="Lechelt-Kunze C."/>
            <person name="Meissner R.C."/>
            <person name="Drewes M."/>
            <person name="Tietjen K."/>
        </authorList>
    </citation>
    <scope>INDUCTION</scope>
    <scope>GENE FAMILY</scope>
</reference>
<reference key="4">
    <citation type="journal article" date="2008" name="Plant Mol. Biol.">
        <title>The VLCFA elongase gene family in Arabidopsis thaliana: phylogenetic analysis, 3D modelling and expression profiling.</title>
        <authorList>
            <person name="Joubes J."/>
            <person name="Raffaele S."/>
            <person name="Bourdenx B."/>
            <person name="Garcia C."/>
            <person name="Laroche-Traineau J."/>
            <person name="Moreau P."/>
            <person name="Domergue F."/>
            <person name="Lessire R."/>
        </authorList>
    </citation>
    <scope>GENE FAMILY</scope>
    <scope>NOMENCLATURE</scope>
    <scope>3D-STRUCTURE MODELING</scope>
    <scope>TISSUE SPECIFICITY</scope>
</reference>
<evidence type="ECO:0000250" key="1">
    <source>
        <dbReference type="UniProtKB" id="Q38860"/>
    </source>
</evidence>
<evidence type="ECO:0000255" key="2"/>
<evidence type="ECO:0000269" key="3">
    <source>
    </source>
</evidence>
<evidence type="ECO:0000269" key="4">
    <source>
    </source>
</evidence>
<evidence type="ECO:0000303" key="5">
    <source>
    </source>
</evidence>
<evidence type="ECO:0000305" key="6"/>
<evidence type="ECO:0000312" key="7">
    <source>
        <dbReference type="Araport" id="AT3G10280"/>
    </source>
</evidence>
<evidence type="ECO:0000312" key="8">
    <source>
        <dbReference type="EMBL" id="AAF02814.1"/>
    </source>
</evidence>
<sequence length="459" mass="51626">MFIAMADFKLLLLILILLSLFELDLLHFHHDFFSPFPVKIGLLLISIFFYAYSTTRSKPVYLVDFSCHQPTDSCKISSETFFNMAKGAQLYTEETIQFMTRILNRSGLGDDTYSPRCMLTSPPTPSMYEARHESELVIFGALNSLFKKTGIEPREVGIFIVNCSLFNPNPSLSSMIVNRYKLKTDVKTYNLSGISVDLATNLLKANPNTYAVIVSTENMTLSMYRGNDRSMLVPNCLFRVGGAAVMLSNRSQDRVRSKYELTHIVRTHKGSSDKHYTCAEQKEDSKGIVGVALSKELTVVAGDTLKTNLTALGPLVLPLSEKLRFILFLVKSKLFRLKVSPYVPDFKLCFKHFCIHAGGRALLDAVEKGLGLSEFDLEPSRMTLHRFGNTSSSSLWYELAYVEAKCRVKRGDRVWQLAFGSGFKCNSIVWRALRTIPANESLVGNPWGDSVHKYPVHVT</sequence>
<keyword id="KW-0012">Acyltransferase</keyword>
<keyword id="KW-0472">Membrane</keyword>
<keyword id="KW-1185">Reference proteome</keyword>
<keyword id="KW-0732">Signal</keyword>
<keyword id="KW-0808">Transferase</keyword>
<keyword id="KW-0812">Transmembrane</keyword>
<keyword id="KW-1133">Transmembrane helix</keyword>
<organism>
    <name type="scientific">Arabidopsis thaliana</name>
    <name type="common">Mouse-ear cress</name>
    <dbReference type="NCBI Taxonomy" id="3702"/>
    <lineage>
        <taxon>Eukaryota</taxon>
        <taxon>Viridiplantae</taxon>
        <taxon>Streptophyta</taxon>
        <taxon>Embryophyta</taxon>
        <taxon>Tracheophyta</taxon>
        <taxon>Spermatophyta</taxon>
        <taxon>Magnoliopsida</taxon>
        <taxon>eudicotyledons</taxon>
        <taxon>Gunneridae</taxon>
        <taxon>Pentapetalae</taxon>
        <taxon>rosids</taxon>
        <taxon>malvids</taxon>
        <taxon>Brassicales</taxon>
        <taxon>Brassicaceae</taxon>
        <taxon>Camelineae</taxon>
        <taxon>Arabidopsis</taxon>
    </lineage>
</organism>
<feature type="signal peptide" evidence="2">
    <location>
        <begin position="1"/>
        <end position="25"/>
    </location>
</feature>
<feature type="chain" id="PRO_0000249106" description="Probable 3-ketoacyl-CoA synthase 14">
    <location>
        <begin position="26"/>
        <end position="459"/>
    </location>
</feature>
<feature type="transmembrane region" description="Helical" evidence="2">
    <location>
        <begin position="32"/>
        <end position="52"/>
    </location>
</feature>
<feature type="domain" description="FAE" evidence="2">
    <location>
        <begin position="52"/>
        <end position="334"/>
    </location>
</feature>
<feature type="active site" evidence="1">
    <location>
        <position position="268"/>
    </location>
</feature>
<feature type="active site" evidence="1">
    <location>
        <position position="352"/>
    </location>
</feature>
<feature type="active site" evidence="1">
    <location>
        <position position="356"/>
    </location>
</feature>
<feature type="active site" evidence="1">
    <location>
        <position position="385"/>
    </location>
</feature>
<feature type="active site" evidence="1">
    <location>
        <position position="389"/>
    </location>
</feature>
<proteinExistence type="evidence at transcript level"/>
<gene>
    <name evidence="5" type="primary">KCS14</name>
    <name evidence="7" type="ordered locus">At3g10280</name>
    <name evidence="8" type="ORF">F14P13.12</name>
</gene>
<dbReference type="EC" id="2.3.1.199" evidence="6"/>
<dbReference type="EMBL" id="AC009400">
    <property type="protein sequence ID" value="AAF02814.1"/>
    <property type="molecule type" value="Genomic_DNA"/>
</dbReference>
<dbReference type="EMBL" id="CP002686">
    <property type="protein sequence ID" value="AEE74883.1"/>
    <property type="molecule type" value="Genomic_DNA"/>
</dbReference>
<dbReference type="RefSeq" id="NP_187639.1">
    <property type="nucleotide sequence ID" value="NM_111863.2"/>
</dbReference>
<dbReference type="SMR" id="Q9SS39"/>
<dbReference type="FunCoup" id="Q9SS39">
    <property type="interactions" value="202"/>
</dbReference>
<dbReference type="STRING" id="3702.Q9SS39"/>
<dbReference type="GlyGen" id="Q9SS39">
    <property type="glycosylation" value="1 site"/>
</dbReference>
<dbReference type="PaxDb" id="3702-AT3G10280.1"/>
<dbReference type="ProteomicsDB" id="230172"/>
<dbReference type="EnsemblPlants" id="AT3G10280.1">
    <property type="protein sequence ID" value="AT3G10280.1"/>
    <property type="gene ID" value="AT3G10280"/>
</dbReference>
<dbReference type="GeneID" id="820190"/>
<dbReference type="Gramene" id="AT3G10280.1">
    <property type="protein sequence ID" value="AT3G10280.1"/>
    <property type="gene ID" value="AT3G10280"/>
</dbReference>
<dbReference type="KEGG" id="ath:AT3G10280"/>
<dbReference type="Araport" id="AT3G10280"/>
<dbReference type="TAIR" id="AT3G10280">
    <property type="gene designation" value="KCS14"/>
</dbReference>
<dbReference type="eggNOG" id="ENOG502QPKZ">
    <property type="taxonomic scope" value="Eukaryota"/>
</dbReference>
<dbReference type="HOGENOM" id="CLU_013238_2_1_1"/>
<dbReference type="InParanoid" id="Q9SS39"/>
<dbReference type="OMA" id="YDGIHLR"/>
<dbReference type="PhylomeDB" id="Q9SS39"/>
<dbReference type="BioCyc" id="ARA:AT3G10280-MONOMER"/>
<dbReference type="UniPathway" id="UPA00094"/>
<dbReference type="PRO" id="PR:Q9SS39"/>
<dbReference type="Proteomes" id="UP000006548">
    <property type="component" value="Chromosome 3"/>
</dbReference>
<dbReference type="ExpressionAtlas" id="Q9SS39">
    <property type="expression patterns" value="baseline and differential"/>
</dbReference>
<dbReference type="GO" id="GO:0016020">
    <property type="term" value="C:membrane"/>
    <property type="evidence" value="ECO:0007669"/>
    <property type="project" value="UniProtKB-SubCell"/>
</dbReference>
<dbReference type="GO" id="GO:0009922">
    <property type="term" value="F:fatty acid elongase activity"/>
    <property type="evidence" value="ECO:0007669"/>
    <property type="project" value="UniProtKB-EC"/>
</dbReference>
<dbReference type="GO" id="GO:0006633">
    <property type="term" value="P:fatty acid biosynthetic process"/>
    <property type="evidence" value="ECO:0007669"/>
    <property type="project" value="UniProtKB-UniPathway"/>
</dbReference>
<dbReference type="CDD" id="cd00831">
    <property type="entry name" value="CHS_like"/>
    <property type="match status" value="1"/>
</dbReference>
<dbReference type="Gene3D" id="3.40.47.10">
    <property type="match status" value="1"/>
</dbReference>
<dbReference type="InterPro" id="IPR012392">
    <property type="entry name" value="3-ktacl-CoA_syn"/>
</dbReference>
<dbReference type="InterPro" id="IPR013747">
    <property type="entry name" value="ACP_syn_III_C"/>
</dbReference>
<dbReference type="InterPro" id="IPR013601">
    <property type="entry name" value="FAE1_typ3_polyketide_synth"/>
</dbReference>
<dbReference type="InterPro" id="IPR016039">
    <property type="entry name" value="Thiolase-like"/>
</dbReference>
<dbReference type="PANTHER" id="PTHR31561">
    <property type="entry name" value="3-KETOACYL-COA SYNTHASE"/>
    <property type="match status" value="1"/>
</dbReference>
<dbReference type="Pfam" id="PF08541">
    <property type="entry name" value="ACP_syn_III_C"/>
    <property type="match status" value="1"/>
</dbReference>
<dbReference type="Pfam" id="PF08392">
    <property type="entry name" value="FAE1_CUT1_RppA"/>
    <property type="match status" value="1"/>
</dbReference>
<dbReference type="PIRSF" id="PIRSF036417">
    <property type="entry name" value="3-ktacl-CoA_syn"/>
    <property type="match status" value="1"/>
</dbReference>
<dbReference type="SUPFAM" id="SSF53901">
    <property type="entry name" value="Thiolase-like"/>
    <property type="match status" value="2"/>
</dbReference>
<accession>Q9SS39</accession>
<comment type="catalytic activity">
    <reaction evidence="6">
        <text>a very-long-chain acyl-CoA + malonyl-CoA + H(+) = a very-long-chain 3-oxoacyl-CoA + CO2 + CoA</text>
        <dbReference type="Rhea" id="RHEA:32727"/>
        <dbReference type="ChEBI" id="CHEBI:15378"/>
        <dbReference type="ChEBI" id="CHEBI:16526"/>
        <dbReference type="ChEBI" id="CHEBI:57287"/>
        <dbReference type="ChEBI" id="CHEBI:57384"/>
        <dbReference type="ChEBI" id="CHEBI:90725"/>
        <dbReference type="ChEBI" id="CHEBI:90736"/>
        <dbReference type="EC" id="2.3.1.199"/>
    </reaction>
</comment>
<comment type="pathway">
    <text>Lipid metabolism; fatty acid biosynthesis.</text>
</comment>
<comment type="subcellular location">
    <subcellularLocation>
        <location evidence="2">Membrane</location>
        <topology evidence="2">Single-pass membrane protein</topology>
    </subcellularLocation>
</comment>
<comment type="tissue specificity">
    <text evidence="4">Expressed in siliques.</text>
</comment>
<comment type="induction">
    <text evidence="3">Repressed by herbicides such as flufenacet and benfuresate.</text>
</comment>
<comment type="similarity">
    <text evidence="6">Belongs to the thiolase-like superfamily. Chalcone/stilbene synthases family.</text>
</comment>
<name>KCS14_ARATH</name>